<dbReference type="EC" id="4.1.1.11" evidence="1"/>
<dbReference type="EMBL" id="CP001348">
    <property type="protein sequence ID" value="ACL76135.1"/>
    <property type="molecule type" value="Genomic_DNA"/>
</dbReference>
<dbReference type="RefSeq" id="WP_015925250.1">
    <property type="nucleotide sequence ID" value="NC_011898.1"/>
</dbReference>
<dbReference type="SMR" id="B8I2Z2"/>
<dbReference type="STRING" id="394503.Ccel_1785"/>
<dbReference type="KEGG" id="cce:Ccel_1785"/>
<dbReference type="eggNOG" id="COG0853">
    <property type="taxonomic scope" value="Bacteria"/>
</dbReference>
<dbReference type="HOGENOM" id="CLU_115305_2_0_9"/>
<dbReference type="OrthoDB" id="9803983at2"/>
<dbReference type="UniPathway" id="UPA00028">
    <property type="reaction ID" value="UER00002"/>
</dbReference>
<dbReference type="Proteomes" id="UP000001349">
    <property type="component" value="Chromosome"/>
</dbReference>
<dbReference type="GO" id="GO:0005829">
    <property type="term" value="C:cytosol"/>
    <property type="evidence" value="ECO:0007669"/>
    <property type="project" value="TreeGrafter"/>
</dbReference>
<dbReference type="GO" id="GO:0004068">
    <property type="term" value="F:aspartate 1-decarboxylase activity"/>
    <property type="evidence" value="ECO:0007669"/>
    <property type="project" value="UniProtKB-UniRule"/>
</dbReference>
<dbReference type="GO" id="GO:0006523">
    <property type="term" value="P:alanine biosynthetic process"/>
    <property type="evidence" value="ECO:0007669"/>
    <property type="project" value="InterPro"/>
</dbReference>
<dbReference type="GO" id="GO:0015940">
    <property type="term" value="P:pantothenate biosynthetic process"/>
    <property type="evidence" value="ECO:0007669"/>
    <property type="project" value="UniProtKB-UniRule"/>
</dbReference>
<dbReference type="CDD" id="cd06919">
    <property type="entry name" value="Asp_decarbox"/>
    <property type="match status" value="1"/>
</dbReference>
<dbReference type="Gene3D" id="2.40.40.20">
    <property type="match status" value="1"/>
</dbReference>
<dbReference type="HAMAP" id="MF_00446">
    <property type="entry name" value="PanD"/>
    <property type="match status" value="1"/>
</dbReference>
<dbReference type="InterPro" id="IPR009010">
    <property type="entry name" value="Asp_de-COase-like_dom_sf"/>
</dbReference>
<dbReference type="InterPro" id="IPR003190">
    <property type="entry name" value="Asp_decarbox"/>
</dbReference>
<dbReference type="NCBIfam" id="TIGR00223">
    <property type="entry name" value="panD"/>
    <property type="match status" value="1"/>
</dbReference>
<dbReference type="PANTHER" id="PTHR21012">
    <property type="entry name" value="ASPARTATE 1-DECARBOXYLASE"/>
    <property type="match status" value="1"/>
</dbReference>
<dbReference type="PANTHER" id="PTHR21012:SF0">
    <property type="entry name" value="ASPARTATE 1-DECARBOXYLASE"/>
    <property type="match status" value="1"/>
</dbReference>
<dbReference type="Pfam" id="PF02261">
    <property type="entry name" value="Asp_decarbox"/>
    <property type="match status" value="1"/>
</dbReference>
<dbReference type="PIRSF" id="PIRSF006246">
    <property type="entry name" value="Asp_decarbox"/>
    <property type="match status" value="1"/>
</dbReference>
<dbReference type="SUPFAM" id="SSF50692">
    <property type="entry name" value="ADC-like"/>
    <property type="match status" value="1"/>
</dbReference>
<name>PAND_RUMCH</name>
<comment type="function">
    <text evidence="1">Catalyzes the pyruvoyl-dependent decarboxylation of aspartate to produce beta-alanine.</text>
</comment>
<comment type="catalytic activity">
    <reaction evidence="1">
        <text>L-aspartate + H(+) = beta-alanine + CO2</text>
        <dbReference type="Rhea" id="RHEA:19497"/>
        <dbReference type="ChEBI" id="CHEBI:15378"/>
        <dbReference type="ChEBI" id="CHEBI:16526"/>
        <dbReference type="ChEBI" id="CHEBI:29991"/>
        <dbReference type="ChEBI" id="CHEBI:57966"/>
        <dbReference type="EC" id="4.1.1.11"/>
    </reaction>
</comment>
<comment type="cofactor">
    <cofactor evidence="1">
        <name>pyruvate</name>
        <dbReference type="ChEBI" id="CHEBI:15361"/>
    </cofactor>
    <text evidence="1">Binds 1 pyruvoyl group covalently per subunit.</text>
</comment>
<comment type="pathway">
    <text evidence="1">Cofactor biosynthesis; (R)-pantothenate biosynthesis; beta-alanine from L-aspartate: step 1/1.</text>
</comment>
<comment type="subunit">
    <text evidence="1">Heterooctamer of four alpha and four beta subunits.</text>
</comment>
<comment type="subcellular location">
    <subcellularLocation>
        <location evidence="1">Cytoplasm</location>
    </subcellularLocation>
</comment>
<comment type="PTM">
    <text evidence="1">Is synthesized initially as an inactive proenzyme, which is activated by self-cleavage at a specific serine bond to produce a beta-subunit with a hydroxyl group at its C-terminus and an alpha-subunit with a pyruvoyl group at its N-terminus.</text>
</comment>
<comment type="similarity">
    <text evidence="1">Belongs to the PanD family.</text>
</comment>
<protein>
    <recommendedName>
        <fullName evidence="1">Aspartate 1-decarboxylase</fullName>
        <ecNumber evidence="1">4.1.1.11</ecNumber>
    </recommendedName>
    <alternativeName>
        <fullName evidence="1">Aspartate alpha-decarboxylase</fullName>
    </alternativeName>
    <component>
        <recommendedName>
            <fullName evidence="1">Aspartate 1-decarboxylase beta chain</fullName>
        </recommendedName>
    </component>
    <component>
        <recommendedName>
            <fullName evidence="1">Aspartate 1-decarboxylase alpha chain</fullName>
        </recommendedName>
    </component>
</protein>
<sequence>MNITLLSGKIHRATVTQAELNYVGSITIDQDLLEAAGIMEYEKVCVVNINNGIRLETYTIAGEKGSGIICLNGAAARYAQVSDKVIIMAYAQMTKEEAQKHKPNVVFVDDNNRITRKTNYEKHGQIVE</sequence>
<gene>
    <name evidence="1" type="primary">panD</name>
    <name type="ordered locus">Ccel_1785</name>
</gene>
<evidence type="ECO:0000255" key="1">
    <source>
        <dbReference type="HAMAP-Rule" id="MF_00446"/>
    </source>
</evidence>
<accession>B8I2Z2</accession>
<keyword id="KW-0068">Autocatalytic cleavage</keyword>
<keyword id="KW-0963">Cytoplasm</keyword>
<keyword id="KW-0210">Decarboxylase</keyword>
<keyword id="KW-0456">Lyase</keyword>
<keyword id="KW-0566">Pantothenate biosynthesis</keyword>
<keyword id="KW-0670">Pyruvate</keyword>
<keyword id="KW-1185">Reference proteome</keyword>
<keyword id="KW-0704">Schiff base</keyword>
<keyword id="KW-0865">Zymogen</keyword>
<reference key="1">
    <citation type="submission" date="2009-01" db="EMBL/GenBank/DDBJ databases">
        <title>Complete sequence of Clostridium cellulolyticum H10.</title>
        <authorList>
            <consortium name="US DOE Joint Genome Institute"/>
            <person name="Lucas S."/>
            <person name="Copeland A."/>
            <person name="Lapidus A."/>
            <person name="Glavina del Rio T."/>
            <person name="Dalin E."/>
            <person name="Tice H."/>
            <person name="Bruce D."/>
            <person name="Goodwin L."/>
            <person name="Pitluck S."/>
            <person name="Chertkov O."/>
            <person name="Saunders E."/>
            <person name="Brettin T."/>
            <person name="Detter J.C."/>
            <person name="Han C."/>
            <person name="Larimer F."/>
            <person name="Land M."/>
            <person name="Hauser L."/>
            <person name="Kyrpides N."/>
            <person name="Ivanova N."/>
            <person name="Zhou J."/>
            <person name="Richardson P."/>
        </authorList>
    </citation>
    <scope>NUCLEOTIDE SEQUENCE [LARGE SCALE GENOMIC DNA]</scope>
    <source>
        <strain>ATCC 35319 / DSM 5812 / JCM 6584 / H10</strain>
    </source>
</reference>
<organism>
    <name type="scientific">Ruminiclostridium cellulolyticum (strain ATCC 35319 / DSM 5812 / JCM 6584 / H10)</name>
    <name type="common">Clostridium cellulolyticum</name>
    <dbReference type="NCBI Taxonomy" id="394503"/>
    <lineage>
        <taxon>Bacteria</taxon>
        <taxon>Bacillati</taxon>
        <taxon>Bacillota</taxon>
        <taxon>Clostridia</taxon>
        <taxon>Eubacteriales</taxon>
        <taxon>Oscillospiraceae</taxon>
        <taxon>Ruminiclostridium</taxon>
    </lineage>
</organism>
<proteinExistence type="inferred from homology"/>
<feature type="chain" id="PRO_1000191960" description="Aspartate 1-decarboxylase beta chain" evidence="1">
    <location>
        <begin position="1"/>
        <end position="24"/>
    </location>
</feature>
<feature type="chain" id="PRO_1000191961" description="Aspartate 1-decarboxylase alpha chain" evidence="1">
    <location>
        <begin position="25"/>
        <end position="128"/>
    </location>
</feature>
<feature type="active site" description="Schiff-base intermediate with substrate; via pyruvic acid" evidence="1">
    <location>
        <position position="25"/>
    </location>
</feature>
<feature type="active site" description="Proton donor" evidence="1">
    <location>
        <position position="58"/>
    </location>
</feature>
<feature type="binding site" evidence="1">
    <location>
        <position position="57"/>
    </location>
    <ligand>
        <name>substrate</name>
    </ligand>
</feature>
<feature type="binding site" evidence="1">
    <location>
        <begin position="73"/>
        <end position="75"/>
    </location>
    <ligand>
        <name>substrate</name>
    </ligand>
</feature>
<feature type="modified residue" description="Pyruvic acid (Ser)" evidence="1">
    <location>
        <position position="25"/>
    </location>
</feature>